<reference key="1">
    <citation type="journal article" date="1999" name="Nature">
        <title>Sequence and analysis of chromosome 4 of the plant Arabidopsis thaliana.</title>
        <authorList>
            <person name="Mayer K.F.X."/>
            <person name="Schueller C."/>
            <person name="Wambutt R."/>
            <person name="Murphy G."/>
            <person name="Volckaert G."/>
            <person name="Pohl T."/>
            <person name="Duesterhoeft A."/>
            <person name="Stiekema W."/>
            <person name="Entian K.-D."/>
            <person name="Terryn N."/>
            <person name="Harris B."/>
            <person name="Ansorge W."/>
            <person name="Brandt P."/>
            <person name="Grivell L.A."/>
            <person name="Rieger M."/>
            <person name="Weichselgartner M."/>
            <person name="de Simone V."/>
            <person name="Obermaier B."/>
            <person name="Mache R."/>
            <person name="Mueller M."/>
            <person name="Kreis M."/>
            <person name="Delseny M."/>
            <person name="Puigdomenech P."/>
            <person name="Watson M."/>
            <person name="Schmidtheini T."/>
            <person name="Reichert B."/>
            <person name="Portetelle D."/>
            <person name="Perez-Alonso M."/>
            <person name="Boutry M."/>
            <person name="Bancroft I."/>
            <person name="Vos P."/>
            <person name="Hoheisel J."/>
            <person name="Zimmermann W."/>
            <person name="Wedler H."/>
            <person name="Ridley P."/>
            <person name="Langham S.-A."/>
            <person name="McCullagh B."/>
            <person name="Bilham L."/>
            <person name="Robben J."/>
            <person name="van der Schueren J."/>
            <person name="Grymonprez B."/>
            <person name="Chuang Y.-J."/>
            <person name="Vandenbussche F."/>
            <person name="Braeken M."/>
            <person name="Weltjens I."/>
            <person name="Voet M."/>
            <person name="Bastiaens I."/>
            <person name="Aert R."/>
            <person name="Defoor E."/>
            <person name="Weitzenegger T."/>
            <person name="Bothe G."/>
            <person name="Ramsperger U."/>
            <person name="Hilbert H."/>
            <person name="Braun M."/>
            <person name="Holzer E."/>
            <person name="Brandt A."/>
            <person name="Peters S."/>
            <person name="van Staveren M."/>
            <person name="Dirkse W."/>
            <person name="Mooijman P."/>
            <person name="Klein Lankhorst R."/>
            <person name="Rose M."/>
            <person name="Hauf J."/>
            <person name="Koetter P."/>
            <person name="Berneiser S."/>
            <person name="Hempel S."/>
            <person name="Feldpausch M."/>
            <person name="Lamberth S."/>
            <person name="Van den Daele H."/>
            <person name="De Keyser A."/>
            <person name="Buysshaert C."/>
            <person name="Gielen J."/>
            <person name="Villarroel R."/>
            <person name="De Clercq R."/>
            <person name="van Montagu M."/>
            <person name="Rogers J."/>
            <person name="Cronin A."/>
            <person name="Quail M.A."/>
            <person name="Bray-Allen S."/>
            <person name="Clark L."/>
            <person name="Doggett J."/>
            <person name="Hall S."/>
            <person name="Kay M."/>
            <person name="Lennard N."/>
            <person name="McLay K."/>
            <person name="Mayes R."/>
            <person name="Pettett A."/>
            <person name="Rajandream M.A."/>
            <person name="Lyne M."/>
            <person name="Benes V."/>
            <person name="Rechmann S."/>
            <person name="Borkova D."/>
            <person name="Bloecker H."/>
            <person name="Scharfe M."/>
            <person name="Grimm M."/>
            <person name="Loehnert T.-H."/>
            <person name="Dose S."/>
            <person name="de Haan M."/>
            <person name="Maarse A.C."/>
            <person name="Schaefer M."/>
            <person name="Mueller-Auer S."/>
            <person name="Gabel C."/>
            <person name="Fuchs M."/>
            <person name="Fartmann B."/>
            <person name="Granderath K."/>
            <person name="Dauner D."/>
            <person name="Herzl A."/>
            <person name="Neumann S."/>
            <person name="Argiriou A."/>
            <person name="Vitale D."/>
            <person name="Liguori R."/>
            <person name="Piravandi E."/>
            <person name="Massenet O."/>
            <person name="Quigley F."/>
            <person name="Clabauld G."/>
            <person name="Muendlein A."/>
            <person name="Felber R."/>
            <person name="Schnabl S."/>
            <person name="Hiller R."/>
            <person name="Schmidt W."/>
            <person name="Lecharny A."/>
            <person name="Aubourg S."/>
            <person name="Chefdor F."/>
            <person name="Cooke R."/>
            <person name="Berger C."/>
            <person name="Monfort A."/>
            <person name="Casacuberta E."/>
            <person name="Gibbons T."/>
            <person name="Weber N."/>
            <person name="Vandenbol M."/>
            <person name="Bargues M."/>
            <person name="Terol J."/>
            <person name="Torres A."/>
            <person name="Perez-Perez A."/>
            <person name="Purnelle B."/>
            <person name="Bent E."/>
            <person name="Johnson S."/>
            <person name="Tacon D."/>
            <person name="Jesse T."/>
            <person name="Heijnen L."/>
            <person name="Schwarz S."/>
            <person name="Scholler P."/>
            <person name="Heber S."/>
            <person name="Francs P."/>
            <person name="Bielke C."/>
            <person name="Frishman D."/>
            <person name="Haase D."/>
            <person name="Lemcke K."/>
            <person name="Mewes H.-W."/>
            <person name="Stocker S."/>
            <person name="Zaccaria P."/>
            <person name="Bevan M."/>
            <person name="Wilson R.K."/>
            <person name="de la Bastide M."/>
            <person name="Habermann K."/>
            <person name="Parnell L."/>
            <person name="Dedhia N."/>
            <person name="Gnoj L."/>
            <person name="Schutz K."/>
            <person name="Huang E."/>
            <person name="Spiegel L."/>
            <person name="Sekhon M."/>
            <person name="Murray J."/>
            <person name="Sheet P."/>
            <person name="Cordes M."/>
            <person name="Abu-Threideh J."/>
            <person name="Stoneking T."/>
            <person name="Kalicki J."/>
            <person name="Graves T."/>
            <person name="Harmon G."/>
            <person name="Edwards J."/>
            <person name="Latreille P."/>
            <person name="Courtney L."/>
            <person name="Cloud J."/>
            <person name="Abbott A."/>
            <person name="Scott K."/>
            <person name="Johnson D."/>
            <person name="Minx P."/>
            <person name="Bentley D."/>
            <person name="Fulton B."/>
            <person name="Miller N."/>
            <person name="Greco T."/>
            <person name="Kemp K."/>
            <person name="Kramer J."/>
            <person name="Fulton L."/>
            <person name="Mardis E."/>
            <person name="Dante M."/>
            <person name="Pepin K."/>
            <person name="Hillier L.W."/>
            <person name="Nelson J."/>
            <person name="Spieth J."/>
            <person name="Ryan E."/>
            <person name="Andrews S."/>
            <person name="Geisel C."/>
            <person name="Layman D."/>
            <person name="Du H."/>
            <person name="Ali J."/>
            <person name="Berghoff A."/>
            <person name="Jones K."/>
            <person name="Drone K."/>
            <person name="Cotton M."/>
            <person name="Joshu C."/>
            <person name="Antonoiu B."/>
            <person name="Zidanic M."/>
            <person name="Strong C."/>
            <person name="Sun H."/>
            <person name="Lamar B."/>
            <person name="Yordan C."/>
            <person name="Ma P."/>
            <person name="Zhong J."/>
            <person name="Preston R."/>
            <person name="Vil D."/>
            <person name="Shekher M."/>
            <person name="Matero A."/>
            <person name="Shah R."/>
            <person name="Swaby I.K."/>
            <person name="O'Shaughnessy A."/>
            <person name="Rodriguez M."/>
            <person name="Hoffman J."/>
            <person name="Till S."/>
            <person name="Granat S."/>
            <person name="Shohdy N."/>
            <person name="Hasegawa A."/>
            <person name="Hameed A."/>
            <person name="Lodhi M."/>
            <person name="Johnson A."/>
            <person name="Chen E."/>
            <person name="Marra M.A."/>
            <person name="Martienssen R."/>
            <person name="McCombie W.R."/>
        </authorList>
    </citation>
    <scope>NUCLEOTIDE SEQUENCE [LARGE SCALE GENOMIC DNA]</scope>
    <source>
        <strain>cv. Columbia</strain>
    </source>
</reference>
<reference key="2">
    <citation type="journal article" date="2017" name="Plant J.">
        <title>Araport11: a complete reannotation of the Arabidopsis thaliana reference genome.</title>
        <authorList>
            <person name="Cheng C.Y."/>
            <person name="Krishnakumar V."/>
            <person name="Chan A.P."/>
            <person name="Thibaud-Nissen F."/>
            <person name="Schobel S."/>
            <person name="Town C.D."/>
        </authorList>
    </citation>
    <scope>GENOME REANNOTATION</scope>
    <source>
        <strain>cv. Columbia</strain>
    </source>
</reference>
<reference key="3">
    <citation type="journal article" date="2003" name="Science">
        <title>Empirical analysis of transcriptional activity in the Arabidopsis genome.</title>
        <authorList>
            <person name="Yamada K."/>
            <person name="Lim J."/>
            <person name="Dale J.M."/>
            <person name="Chen H."/>
            <person name="Shinn P."/>
            <person name="Palm C.J."/>
            <person name="Southwick A.M."/>
            <person name="Wu H.C."/>
            <person name="Kim C.J."/>
            <person name="Nguyen M."/>
            <person name="Pham P.K."/>
            <person name="Cheuk R.F."/>
            <person name="Karlin-Newmann G."/>
            <person name="Liu S.X."/>
            <person name="Lam B."/>
            <person name="Sakano H."/>
            <person name="Wu T."/>
            <person name="Yu G."/>
            <person name="Miranda M."/>
            <person name="Quach H.L."/>
            <person name="Tripp M."/>
            <person name="Chang C.H."/>
            <person name="Lee J.M."/>
            <person name="Toriumi M.J."/>
            <person name="Chan M.M."/>
            <person name="Tang C.C."/>
            <person name="Onodera C.S."/>
            <person name="Deng J.M."/>
            <person name="Akiyama K."/>
            <person name="Ansari Y."/>
            <person name="Arakawa T."/>
            <person name="Banh J."/>
            <person name="Banno F."/>
            <person name="Bowser L."/>
            <person name="Brooks S.Y."/>
            <person name="Carninci P."/>
            <person name="Chao Q."/>
            <person name="Choy N."/>
            <person name="Enju A."/>
            <person name="Goldsmith A.D."/>
            <person name="Gurjal M."/>
            <person name="Hansen N.F."/>
            <person name="Hayashizaki Y."/>
            <person name="Johnson-Hopson C."/>
            <person name="Hsuan V.W."/>
            <person name="Iida K."/>
            <person name="Karnes M."/>
            <person name="Khan S."/>
            <person name="Koesema E."/>
            <person name="Ishida J."/>
            <person name="Jiang P.X."/>
            <person name="Jones T."/>
            <person name="Kawai J."/>
            <person name="Kamiya A."/>
            <person name="Meyers C."/>
            <person name="Nakajima M."/>
            <person name="Narusaka M."/>
            <person name="Seki M."/>
            <person name="Sakurai T."/>
            <person name="Satou M."/>
            <person name="Tamse R."/>
            <person name="Vaysberg M."/>
            <person name="Wallender E.K."/>
            <person name="Wong C."/>
            <person name="Yamamura Y."/>
            <person name="Yuan S."/>
            <person name="Shinozaki K."/>
            <person name="Davis R.W."/>
            <person name="Theologis A."/>
            <person name="Ecker J.R."/>
        </authorList>
    </citation>
    <scope>NUCLEOTIDE SEQUENCE [LARGE SCALE MRNA]</scope>
    <source>
        <strain>cv. Columbia</strain>
    </source>
</reference>
<reference key="4">
    <citation type="journal article" date="2002" name="Crit. Rev. Plant Sci.">
        <title>Lectin receptor kinases in plants.</title>
        <authorList>
            <person name="Barre A."/>
            <person name="Herve C."/>
            <person name="Lescure B."/>
            <person name="Rouge P."/>
        </authorList>
    </citation>
    <scope>GENE FAMILY</scope>
</reference>
<reference key="5">
    <citation type="journal article" date="2009" name="J. Exp. Bot.">
        <title>Arabidopsis L-type lectin receptor kinases: phylogeny, classification, and expression profiles.</title>
        <authorList>
            <person name="Bouwmeester K."/>
            <person name="Govers F."/>
        </authorList>
    </citation>
    <scope>GENE FAMILY</scope>
    <scope>NOMENCLATURE</scope>
</reference>
<proteinExistence type="evidence at transcript level"/>
<comment type="catalytic activity">
    <reaction>
        <text>L-seryl-[protein] + ATP = O-phospho-L-seryl-[protein] + ADP + H(+)</text>
        <dbReference type="Rhea" id="RHEA:17989"/>
        <dbReference type="Rhea" id="RHEA-COMP:9863"/>
        <dbReference type="Rhea" id="RHEA-COMP:11604"/>
        <dbReference type="ChEBI" id="CHEBI:15378"/>
        <dbReference type="ChEBI" id="CHEBI:29999"/>
        <dbReference type="ChEBI" id="CHEBI:30616"/>
        <dbReference type="ChEBI" id="CHEBI:83421"/>
        <dbReference type="ChEBI" id="CHEBI:456216"/>
        <dbReference type="EC" id="2.7.11.1"/>
    </reaction>
</comment>
<comment type="catalytic activity">
    <reaction>
        <text>L-threonyl-[protein] + ATP = O-phospho-L-threonyl-[protein] + ADP + H(+)</text>
        <dbReference type="Rhea" id="RHEA:46608"/>
        <dbReference type="Rhea" id="RHEA-COMP:11060"/>
        <dbReference type="Rhea" id="RHEA-COMP:11605"/>
        <dbReference type="ChEBI" id="CHEBI:15378"/>
        <dbReference type="ChEBI" id="CHEBI:30013"/>
        <dbReference type="ChEBI" id="CHEBI:30616"/>
        <dbReference type="ChEBI" id="CHEBI:61977"/>
        <dbReference type="ChEBI" id="CHEBI:456216"/>
        <dbReference type="EC" id="2.7.11.1"/>
    </reaction>
</comment>
<comment type="subcellular location">
    <subcellularLocation>
        <location evidence="1">Cell membrane</location>
        <topology evidence="1">Single-pass type I membrane protein</topology>
    </subcellularLocation>
</comment>
<comment type="similarity">
    <text evidence="5">In the C-terminal section; belongs to the protein kinase superfamily. Ser/Thr protein kinase family.</text>
</comment>
<comment type="similarity">
    <text evidence="5">In the N-terminal section; belongs to the leguminous lectin family.</text>
</comment>
<feature type="signal peptide" evidence="2">
    <location>
        <begin position="1"/>
        <end position="22"/>
    </location>
</feature>
<feature type="chain" id="PRO_0000403087" description="L-type lectin-domain containing receptor kinase IV.3">
    <location>
        <begin position="23"/>
        <end position="674"/>
    </location>
</feature>
<feature type="topological domain" description="Extracellular" evidence="2">
    <location>
        <begin position="23"/>
        <end position="296"/>
    </location>
</feature>
<feature type="transmembrane region" description="Helical" evidence="2">
    <location>
        <begin position="297"/>
        <end position="317"/>
    </location>
</feature>
<feature type="topological domain" description="Cytoplasmic" evidence="2">
    <location>
        <begin position="318"/>
        <end position="674"/>
    </location>
</feature>
<feature type="domain" description="Protein kinase" evidence="3">
    <location>
        <begin position="355"/>
        <end position="632"/>
    </location>
</feature>
<feature type="region of interest" description="Legume-lectin like">
    <location>
        <begin position="26"/>
        <end position="263"/>
    </location>
</feature>
<feature type="active site" description="Proton acceptor" evidence="3 4">
    <location>
        <position position="480"/>
    </location>
</feature>
<feature type="binding site" evidence="3">
    <location>
        <begin position="361"/>
        <end position="369"/>
    </location>
    <ligand>
        <name>ATP</name>
        <dbReference type="ChEBI" id="CHEBI:30616"/>
    </ligand>
</feature>
<feature type="binding site" evidence="3">
    <location>
        <position position="384"/>
    </location>
    <ligand>
        <name>ATP</name>
        <dbReference type="ChEBI" id="CHEBI:30616"/>
    </ligand>
</feature>
<feature type="glycosylation site" description="N-linked (GlcNAc...) asparagine" evidence="2">
    <location>
        <position position="21"/>
    </location>
</feature>
<feature type="glycosylation site" description="N-linked (GlcNAc...) asparagine" evidence="2">
    <location>
        <position position="28"/>
    </location>
</feature>
<feature type="glycosylation site" description="N-linked (GlcNAc...) asparagine" evidence="2">
    <location>
        <position position="40"/>
    </location>
</feature>
<feature type="glycosylation site" description="N-linked (GlcNAc...) asparagine" evidence="2">
    <location>
        <position position="81"/>
    </location>
</feature>
<feature type="glycosylation site" description="N-linked (GlcNAc...) asparagine" evidence="2">
    <location>
        <position position="136"/>
    </location>
</feature>
<feature type="glycosylation site" description="N-linked (GlcNAc...) asparagine" evidence="2">
    <location>
        <position position="188"/>
    </location>
</feature>
<evidence type="ECO:0000250" key="1"/>
<evidence type="ECO:0000255" key="2"/>
<evidence type="ECO:0000255" key="3">
    <source>
        <dbReference type="PROSITE-ProRule" id="PRU00159"/>
    </source>
</evidence>
<evidence type="ECO:0000255" key="4">
    <source>
        <dbReference type="PROSITE-ProRule" id="PRU10027"/>
    </source>
</evidence>
<evidence type="ECO:0000305" key="5"/>
<sequence>MFFKLFTIFFFFIILLSKPLNSSSQSLNFTYNSFHRPPTNISIQGIATVTSNGILKLTDKTVISTGHAFYTEPIRFKDSPNDTVSSFSTTFVIGIYSGIPTISGHGMAFFIAPNPVLSSAMASQYLGLFSSTNNGNDTNHILAVEFDTIMNPEFDDTNDNHVGININSLTSVKSSLVGYWDEINQFNNLTLISRKRMQVWVDYDDRTNQIDVTMAPFGEVKPRKALVSVVRDLSSVFLQDMYLGFSAATGYVLSEHFVFGWSFMVKGKTAPPLTLSKVPKFPRVGPTSLQRFYKNRMPLFSLLLIPVLFVVSLIFLVRFIVRRRRKFAEEFEDWETEFGKNRLRFKDLYYATKGFKDKDLLGSGGFGRVYRGVMPTTKKEIAVKRVSNESRQGLKEFVAEIVSIGRMSHRNLVPLLGYCRRRDELLLVYDYMPNGSLDKYLYDCPEVTLDWKQRFNVIIGVASGLFYLHEEWEQVVIHRDIKASNVLLDAEYNGRLGDFGLARLCDHGSDPQTTRVVGTWGYLAPDHVRTGRATTATDVFAFGVLLLEVACGRRPIEIEIESDESVLLVDSVFGFWIEGNILDATDPNLGSVYDQREVETVLKLGLLCSHSDPQVRPTMRQVLQYLRGDATLPDLSPLDFRGSGKMLGMNHRFSESCTFSSGSSIAYSIVSGGR</sequence>
<protein>
    <recommendedName>
        <fullName>L-type lectin-domain containing receptor kinase IV.3</fullName>
        <shortName>LecRK-IV.3</shortName>
        <ecNumber>2.7.11.1</ecNumber>
    </recommendedName>
</protein>
<name>LRK43_ARATH</name>
<dbReference type="EC" id="2.7.11.1"/>
<dbReference type="EMBL" id="AF069298">
    <property type="protein sequence ID" value="AAC19286.1"/>
    <property type="molecule type" value="Genomic_DNA"/>
</dbReference>
<dbReference type="EMBL" id="AL161494">
    <property type="protein sequence ID" value="CAB80734.1"/>
    <property type="molecule type" value="Genomic_DNA"/>
</dbReference>
<dbReference type="EMBL" id="CP002687">
    <property type="protein sequence ID" value="AEE82167.1"/>
    <property type="molecule type" value="Genomic_DNA"/>
</dbReference>
<dbReference type="EMBL" id="AY094440">
    <property type="protein sequence ID" value="AAM19812.1"/>
    <property type="molecule type" value="mRNA"/>
</dbReference>
<dbReference type="EMBL" id="AY094476">
    <property type="protein sequence ID" value="AAM19843.1"/>
    <property type="molecule type" value="mRNA"/>
</dbReference>
<dbReference type="PIR" id="T01309">
    <property type="entry name" value="T01309"/>
</dbReference>
<dbReference type="RefSeq" id="NP_567233.1">
    <property type="nucleotide sequence ID" value="NM_116474.4"/>
</dbReference>
<dbReference type="SMR" id="O81292"/>
<dbReference type="BioGRID" id="13323">
    <property type="interactions" value="6"/>
</dbReference>
<dbReference type="FunCoup" id="O81292">
    <property type="interactions" value="104"/>
</dbReference>
<dbReference type="IntAct" id="O81292">
    <property type="interactions" value="8"/>
</dbReference>
<dbReference type="STRING" id="3702.O81292"/>
<dbReference type="GlyCosmos" id="O81292">
    <property type="glycosylation" value="6 sites, No reported glycans"/>
</dbReference>
<dbReference type="GlyGen" id="O81292">
    <property type="glycosylation" value="7 sites"/>
</dbReference>
<dbReference type="iPTMnet" id="O81292"/>
<dbReference type="PaxDb" id="3702-AT4G02410.1"/>
<dbReference type="ProteomicsDB" id="238733"/>
<dbReference type="EnsemblPlants" id="AT4G02410.1">
    <property type="protein sequence ID" value="AT4G02410.1"/>
    <property type="gene ID" value="AT4G02410"/>
</dbReference>
<dbReference type="GeneID" id="828032"/>
<dbReference type="Gramene" id="AT4G02410.1">
    <property type="protein sequence ID" value="AT4G02410.1"/>
    <property type="gene ID" value="AT4G02410"/>
</dbReference>
<dbReference type="KEGG" id="ath:AT4G02410"/>
<dbReference type="Araport" id="AT4G02410"/>
<dbReference type="TAIR" id="AT4G02410">
    <property type="gene designation" value="LECRK-IV.3"/>
</dbReference>
<dbReference type="eggNOG" id="ENOG502QSJ4">
    <property type="taxonomic scope" value="Eukaryota"/>
</dbReference>
<dbReference type="HOGENOM" id="CLU_000288_62_3_1"/>
<dbReference type="InParanoid" id="O81292"/>
<dbReference type="OMA" id="TEPIRFK"/>
<dbReference type="PhylomeDB" id="O81292"/>
<dbReference type="PRO" id="PR:O81292"/>
<dbReference type="Proteomes" id="UP000006548">
    <property type="component" value="Chromosome 4"/>
</dbReference>
<dbReference type="ExpressionAtlas" id="O81292">
    <property type="expression patterns" value="baseline and differential"/>
</dbReference>
<dbReference type="GO" id="GO:0005829">
    <property type="term" value="C:cytosol"/>
    <property type="evidence" value="ECO:0007005"/>
    <property type="project" value="TAIR"/>
</dbReference>
<dbReference type="GO" id="GO:0005886">
    <property type="term" value="C:plasma membrane"/>
    <property type="evidence" value="ECO:0000250"/>
    <property type="project" value="UniProtKB"/>
</dbReference>
<dbReference type="GO" id="GO:0005524">
    <property type="term" value="F:ATP binding"/>
    <property type="evidence" value="ECO:0007669"/>
    <property type="project" value="UniProtKB-KW"/>
</dbReference>
<dbReference type="GO" id="GO:0030246">
    <property type="term" value="F:carbohydrate binding"/>
    <property type="evidence" value="ECO:0007669"/>
    <property type="project" value="UniProtKB-KW"/>
</dbReference>
<dbReference type="GO" id="GO:0106310">
    <property type="term" value="F:protein serine kinase activity"/>
    <property type="evidence" value="ECO:0007669"/>
    <property type="project" value="RHEA"/>
</dbReference>
<dbReference type="GO" id="GO:0004674">
    <property type="term" value="F:protein serine/threonine kinase activity"/>
    <property type="evidence" value="ECO:0007669"/>
    <property type="project" value="UniProtKB-KW"/>
</dbReference>
<dbReference type="CDD" id="cd06899">
    <property type="entry name" value="lectin_legume_LecRK_Arcelin_ConA"/>
    <property type="match status" value="1"/>
</dbReference>
<dbReference type="CDD" id="cd14066">
    <property type="entry name" value="STKc_IRAK"/>
    <property type="match status" value="1"/>
</dbReference>
<dbReference type="FunFam" id="3.30.200.20:FF:000623">
    <property type="entry name" value="L-type lectin-domain containing receptor kinase IV.1"/>
    <property type="match status" value="1"/>
</dbReference>
<dbReference type="FunFam" id="1.10.510.10:FF:000108">
    <property type="entry name" value="L-type lectin-domain containing receptor kinase S.4"/>
    <property type="match status" value="1"/>
</dbReference>
<dbReference type="FunFam" id="2.60.120.200:FF:000051">
    <property type="entry name" value="L-type lectin-domain containing receptor kinase V.9"/>
    <property type="match status" value="1"/>
</dbReference>
<dbReference type="Gene3D" id="2.60.120.200">
    <property type="match status" value="1"/>
</dbReference>
<dbReference type="Gene3D" id="3.30.200.20">
    <property type="entry name" value="Phosphorylase Kinase, domain 1"/>
    <property type="match status" value="1"/>
</dbReference>
<dbReference type="Gene3D" id="1.10.510.10">
    <property type="entry name" value="Transferase(Phosphotransferase) domain 1"/>
    <property type="match status" value="1"/>
</dbReference>
<dbReference type="InterPro" id="IPR013320">
    <property type="entry name" value="ConA-like_dom_sf"/>
</dbReference>
<dbReference type="InterPro" id="IPR011009">
    <property type="entry name" value="Kinase-like_dom_sf"/>
</dbReference>
<dbReference type="InterPro" id="IPR050528">
    <property type="entry name" value="L-type_Lectin-RKs"/>
</dbReference>
<dbReference type="InterPro" id="IPR019825">
    <property type="entry name" value="Lectin_legB_Mn/Ca_BS"/>
</dbReference>
<dbReference type="InterPro" id="IPR001220">
    <property type="entry name" value="Legume_lectin_dom"/>
</dbReference>
<dbReference type="InterPro" id="IPR000719">
    <property type="entry name" value="Prot_kinase_dom"/>
</dbReference>
<dbReference type="InterPro" id="IPR017441">
    <property type="entry name" value="Protein_kinase_ATP_BS"/>
</dbReference>
<dbReference type="InterPro" id="IPR008271">
    <property type="entry name" value="Ser/Thr_kinase_AS"/>
</dbReference>
<dbReference type="PANTHER" id="PTHR27007">
    <property type="match status" value="1"/>
</dbReference>
<dbReference type="Pfam" id="PF00139">
    <property type="entry name" value="Lectin_legB"/>
    <property type="match status" value="1"/>
</dbReference>
<dbReference type="Pfam" id="PF00069">
    <property type="entry name" value="Pkinase"/>
    <property type="match status" value="1"/>
</dbReference>
<dbReference type="SMART" id="SM00220">
    <property type="entry name" value="S_TKc"/>
    <property type="match status" value="1"/>
</dbReference>
<dbReference type="SUPFAM" id="SSF49899">
    <property type="entry name" value="Concanavalin A-like lectins/glucanases"/>
    <property type="match status" value="1"/>
</dbReference>
<dbReference type="SUPFAM" id="SSF56112">
    <property type="entry name" value="Protein kinase-like (PK-like)"/>
    <property type="match status" value="1"/>
</dbReference>
<dbReference type="PROSITE" id="PS00307">
    <property type="entry name" value="LECTIN_LEGUME_BETA"/>
    <property type="match status" value="1"/>
</dbReference>
<dbReference type="PROSITE" id="PS00107">
    <property type="entry name" value="PROTEIN_KINASE_ATP"/>
    <property type="match status" value="1"/>
</dbReference>
<dbReference type="PROSITE" id="PS50011">
    <property type="entry name" value="PROTEIN_KINASE_DOM"/>
    <property type="match status" value="1"/>
</dbReference>
<dbReference type="PROSITE" id="PS00108">
    <property type="entry name" value="PROTEIN_KINASE_ST"/>
    <property type="match status" value="1"/>
</dbReference>
<gene>
    <name type="primary">LECRK43</name>
    <name type="ordered locus">At4g02410</name>
    <name type="ORF">T14P8.3</name>
</gene>
<accession>O81292</accession>
<keyword id="KW-0067">ATP-binding</keyword>
<keyword id="KW-1003">Cell membrane</keyword>
<keyword id="KW-0325">Glycoprotein</keyword>
<keyword id="KW-0418">Kinase</keyword>
<keyword id="KW-0430">Lectin</keyword>
<keyword id="KW-0472">Membrane</keyword>
<keyword id="KW-0547">Nucleotide-binding</keyword>
<keyword id="KW-0675">Receptor</keyword>
<keyword id="KW-1185">Reference proteome</keyword>
<keyword id="KW-0723">Serine/threonine-protein kinase</keyword>
<keyword id="KW-0732">Signal</keyword>
<keyword id="KW-0808">Transferase</keyword>
<keyword id="KW-0812">Transmembrane</keyword>
<keyword id="KW-1133">Transmembrane helix</keyword>
<organism>
    <name type="scientific">Arabidopsis thaliana</name>
    <name type="common">Mouse-ear cress</name>
    <dbReference type="NCBI Taxonomy" id="3702"/>
    <lineage>
        <taxon>Eukaryota</taxon>
        <taxon>Viridiplantae</taxon>
        <taxon>Streptophyta</taxon>
        <taxon>Embryophyta</taxon>
        <taxon>Tracheophyta</taxon>
        <taxon>Spermatophyta</taxon>
        <taxon>Magnoliopsida</taxon>
        <taxon>eudicotyledons</taxon>
        <taxon>Gunneridae</taxon>
        <taxon>Pentapetalae</taxon>
        <taxon>rosids</taxon>
        <taxon>malvids</taxon>
        <taxon>Brassicales</taxon>
        <taxon>Brassicaceae</taxon>
        <taxon>Camelineae</taxon>
        <taxon>Arabidopsis</taxon>
    </lineage>
</organism>